<feature type="chain" id="PRO_0000201846" description="Uncharacterized membrane protein YhhN">
    <location>
        <begin position="1"/>
        <end position="208"/>
    </location>
</feature>
<feature type="transmembrane region" description="Helical" evidence="1">
    <location>
        <begin position="35"/>
        <end position="55"/>
    </location>
</feature>
<feature type="transmembrane region" description="Helical" evidence="1">
    <location>
        <begin position="76"/>
        <end position="96"/>
    </location>
</feature>
<feature type="transmembrane region" description="Helical" evidence="1">
    <location>
        <begin position="102"/>
        <end position="122"/>
    </location>
</feature>
<feature type="transmembrane region" description="Helical" evidence="1">
    <location>
        <begin position="132"/>
        <end position="152"/>
    </location>
</feature>
<feature type="transmembrane region" description="Helical" evidence="1">
    <location>
        <begin position="156"/>
        <end position="176"/>
    </location>
</feature>
<feature type="transmembrane region" description="Helical" evidence="1">
    <location>
        <begin position="188"/>
        <end position="208"/>
    </location>
</feature>
<accession>P0ADJ2</accession>
<accession>P37616</accession>
<protein>
    <recommendedName>
        <fullName>Uncharacterized membrane protein YhhN</fullName>
    </recommendedName>
</protein>
<comment type="subcellular location">
    <subcellularLocation>
        <location evidence="2">Cell membrane</location>
        <topology evidence="2">Multi-pass membrane protein</topology>
    </subcellularLocation>
</comment>
<comment type="similarity">
    <text evidence="2">Belongs to the TMEM86 family.</text>
</comment>
<keyword id="KW-1003">Cell membrane</keyword>
<keyword id="KW-0472">Membrane</keyword>
<keyword id="KW-1185">Reference proteome</keyword>
<keyword id="KW-0812">Transmembrane</keyword>
<keyword id="KW-1133">Transmembrane helix</keyword>
<sequence>MLWSFIAVCLSAWLSVDASYRGPTWQRWVFKPLTLLLLLLLAWQAPMFDAISYLVLAGLCASLLGDALTLLPRQRLMYAIGAFFLSHLLYTIYFASQMTLSFFWPLPLVLLVLGALLLAIIWTRLEEYRWPICTFIGMTLVMVWLAGELWFFRPTAPALSAFVGASLLFISNFVWLGSHYRRRFRADNAIAAACYFAGHFLIVRSLYL</sequence>
<gene>
    <name type="primary">yhhN</name>
    <name type="ordered locus">SF3486</name>
    <name type="ordered locus">S4277</name>
</gene>
<dbReference type="EMBL" id="AE005674">
    <property type="protein sequence ID" value="AAN44945.1"/>
    <property type="molecule type" value="Genomic_DNA"/>
</dbReference>
<dbReference type="EMBL" id="AE014073">
    <property type="protein sequence ID" value="AAP19237.1"/>
    <property type="molecule type" value="Genomic_DNA"/>
</dbReference>
<dbReference type="RefSeq" id="NP_709238.1">
    <property type="nucleotide sequence ID" value="NC_004337.2"/>
</dbReference>
<dbReference type="RefSeq" id="WP_000964718.1">
    <property type="nucleotide sequence ID" value="NZ_WPGW01000010.1"/>
</dbReference>
<dbReference type="STRING" id="198214.SF3486"/>
<dbReference type="PaxDb" id="198214-SF3486"/>
<dbReference type="GeneID" id="1026447"/>
<dbReference type="KEGG" id="sfl:SF3486"/>
<dbReference type="KEGG" id="sfx:S4277"/>
<dbReference type="PATRIC" id="fig|198214.7.peg.4107"/>
<dbReference type="HOGENOM" id="CLU_079086_6_1_6"/>
<dbReference type="Proteomes" id="UP000001006">
    <property type="component" value="Chromosome"/>
</dbReference>
<dbReference type="Proteomes" id="UP000002673">
    <property type="component" value="Chromosome"/>
</dbReference>
<dbReference type="GO" id="GO:0005886">
    <property type="term" value="C:plasma membrane"/>
    <property type="evidence" value="ECO:0007669"/>
    <property type="project" value="UniProtKB-SubCell"/>
</dbReference>
<dbReference type="GO" id="GO:0016787">
    <property type="term" value="F:hydrolase activity"/>
    <property type="evidence" value="ECO:0007669"/>
    <property type="project" value="TreeGrafter"/>
</dbReference>
<dbReference type="InterPro" id="IPR012506">
    <property type="entry name" value="TMEM86B-like"/>
</dbReference>
<dbReference type="PANTHER" id="PTHR31885">
    <property type="entry name" value="GH04784P"/>
    <property type="match status" value="1"/>
</dbReference>
<dbReference type="PANTHER" id="PTHR31885:SF6">
    <property type="entry name" value="GH04784P"/>
    <property type="match status" value="1"/>
</dbReference>
<dbReference type="Pfam" id="PF07947">
    <property type="entry name" value="YhhN"/>
    <property type="match status" value="1"/>
</dbReference>
<evidence type="ECO:0000255" key="1"/>
<evidence type="ECO:0000305" key="2"/>
<name>YHHN_SHIFL</name>
<reference key="1">
    <citation type="journal article" date="2002" name="Nucleic Acids Res.">
        <title>Genome sequence of Shigella flexneri 2a: insights into pathogenicity through comparison with genomes of Escherichia coli K12 and O157.</title>
        <authorList>
            <person name="Jin Q."/>
            <person name="Yuan Z."/>
            <person name="Xu J."/>
            <person name="Wang Y."/>
            <person name="Shen Y."/>
            <person name="Lu W."/>
            <person name="Wang J."/>
            <person name="Liu H."/>
            <person name="Yang J."/>
            <person name="Yang F."/>
            <person name="Zhang X."/>
            <person name="Zhang J."/>
            <person name="Yang G."/>
            <person name="Wu H."/>
            <person name="Qu D."/>
            <person name="Dong J."/>
            <person name="Sun L."/>
            <person name="Xue Y."/>
            <person name="Zhao A."/>
            <person name="Gao Y."/>
            <person name="Zhu J."/>
            <person name="Kan B."/>
            <person name="Ding K."/>
            <person name="Chen S."/>
            <person name="Cheng H."/>
            <person name="Yao Z."/>
            <person name="He B."/>
            <person name="Chen R."/>
            <person name="Ma D."/>
            <person name="Qiang B."/>
            <person name="Wen Y."/>
            <person name="Hou Y."/>
            <person name="Yu J."/>
        </authorList>
    </citation>
    <scope>NUCLEOTIDE SEQUENCE [LARGE SCALE GENOMIC DNA]</scope>
    <source>
        <strain>301 / Serotype 2a</strain>
    </source>
</reference>
<reference key="2">
    <citation type="journal article" date="2003" name="Infect. Immun.">
        <title>Complete genome sequence and comparative genomics of Shigella flexneri serotype 2a strain 2457T.</title>
        <authorList>
            <person name="Wei J."/>
            <person name="Goldberg M.B."/>
            <person name="Burland V."/>
            <person name="Venkatesan M.M."/>
            <person name="Deng W."/>
            <person name="Fournier G."/>
            <person name="Mayhew G.F."/>
            <person name="Plunkett G. III"/>
            <person name="Rose D.J."/>
            <person name="Darling A."/>
            <person name="Mau B."/>
            <person name="Perna N.T."/>
            <person name="Payne S.M."/>
            <person name="Runyen-Janecky L.J."/>
            <person name="Zhou S."/>
            <person name="Schwartz D.C."/>
            <person name="Blattner F.R."/>
        </authorList>
    </citation>
    <scope>NUCLEOTIDE SEQUENCE [LARGE SCALE GENOMIC DNA]</scope>
    <source>
        <strain>ATCC 700930 / 2457T / Serotype 2a</strain>
    </source>
</reference>
<organism>
    <name type="scientific">Shigella flexneri</name>
    <dbReference type="NCBI Taxonomy" id="623"/>
    <lineage>
        <taxon>Bacteria</taxon>
        <taxon>Pseudomonadati</taxon>
        <taxon>Pseudomonadota</taxon>
        <taxon>Gammaproteobacteria</taxon>
        <taxon>Enterobacterales</taxon>
        <taxon>Enterobacteriaceae</taxon>
        <taxon>Shigella</taxon>
    </lineage>
</organism>
<proteinExistence type="inferred from homology"/>